<gene>
    <name evidence="1" type="primary">pyrB</name>
    <name type="ordered locus">RSc0678</name>
    <name type="ORF">RS01583</name>
</gene>
<name>PYRB_RALN1</name>
<organism>
    <name type="scientific">Ralstonia nicotianae (strain ATCC BAA-1114 / GMI1000)</name>
    <name type="common">Ralstonia solanacearum</name>
    <dbReference type="NCBI Taxonomy" id="267608"/>
    <lineage>
        <taxon>Bacteria</taxon>
        <taxon>Pseudomonadati</taxon>
        <taxon>Pseudomonadota</taxon>
        <taxon>Betaproteobacteria</taxon>
        <taxon>Burkholderiales</taxon>
        <taxon>Burkholderiaceae</taxon>
        <taxon>Ralstonia</taxon>
        <taxon>Ralstonia solanacearum species complex</taxon>
    </lineage>
</organism>
<sequence>MTKTFANPQLTKNGELKHLLSIEGLSRDILTHILDTAKQFVSVSDADREVKKVPLLRGKSVFNLFFENSTRTRTTFEIAAKRLSADVINLNINASSTSKGESLLDTINNLSAMQADMFVVRHASSGAPYLIAEHVAPHVHVINAGDGRHAHPTQGLLDMFTIRHYKKDFSNLTVAIVGDILHSRVARSDIHALTTLGCAEVRAIGPRTLLPSGLEHMGVRVFHSMEEGLKGVDAVIMLRLQNERMSGALLPSAQEYFKAYGLTQERLALAKPDAIVMHPGPMNRGVEIDSAVADGVQSVILNQVTFGIAVRMAVMGIVAGNND</sequence>
<protein>
    <recommendedName>
        <fullName evidence="1">Aspartate carbamoyltransferase catalytic subunit</fullName>
        <ecNumber evidence="1">2.1.3.2</ecNumber>
    </recommendedName>
    <alternativeName>
        <fullName evidence="1">Aspartate transcarbamylase</fullName>
        <shortName evidence="1">ATCase</shortName>
    </alternativeName>
</protein>
<evidence type="ECO:0000255" key="1">
    <source>
        <dbReference type="HAMAP-Rule" id="MF_00001"/>
    </source>
</evidence>
<keyword id="KW-0665">Pyrimidine biosynthesis</keyword>
<keyword id="KW-1185">Reference proteome</keyword>
<keyword id="KW-0808">Transferase</keyword>
<reference key="1">
    <citation type="journal article" date="2002" name="Nature">
        <title>Genome sequence of the plant pathogen Ralstonia solanacearum.</title>
        <authorList>
            <person name="Salanoubat M."/>
            <person name="Genin S."/>
            <person name="Artiguenave F."/>
            <person name="Gouzy J."/>
            <person name="Mangenot S."/>
            <person name="Arlat M."/>
            <person name="Billault A."/>
            <person name="Brottier P."/>
            <person name="Camus J.-C."/>
            <person name="Cattolico L."/>
            <person name="Chandler M."/>
            <person name="Choisne N."/>
            <person name="Claudel-Renard C."/>
            <person name="Cunnac S."/>
            <person name="Demange N."/>
            <person name="Gaspin C."/>
            <person name="Lavie M."/>
            <person name="Moisan A."/>
            <person name="Robert C."/>
            <person name="Saurin W."/>
            <person name="Schiex T."/>
            <person name="Siguier P."/>
            <person name="Thebault P."/>
            <person name="Whalen M."/>
            <person name="Wincker P."/>
            <person name="Levy M."/>
            <person name="Weissenbach J."/>
            <person name="Boucher C.A."/>
        </authorList>
    </citation>
    <scope>NUCLEOTIDE SEQUENCE [LARGE SCALE GENOMIC DNA]</scope>
    <source>
        <strain>ATCC BAA-1114 / GMI1000</strain>
    </source>
</reference>
<feature type="chain" id="PRO_0000113182" description="Aspartate carbamoyltransferase catalytic subunit">
    <location>
        <begin position="1"/>
        <end position="323"/>
    </location>
</feature>
<feature type="binding site" evidence="1">
    <location>
        <position position="71"/>
    </location>
    <ligand>
        <name>carbamoyl phosphate</name>
        <dbReference type="ChEBI" id="CHEBI:58228"/>
    </ligand>
</feature>
<feature type="binding site" evidence="1">
    <location>
        <position position="72"/>
    </location>
    <ligand>
        <name>carbamoyl phosphate</name>
        <dbReference type="ChEBI" id="CHEBI:58228"/>
    </ligand>
</feature>
<feature type="binding site" evidence="1">
    <location>
        <position position="99"/>
    </location>
    <ligand>
        <name>L-aspartate</name>
        <dbReference type="ChEBI" id="CHEBI:29991"/>
    </ligand>
</feature>
<feature type="binding site" evidence="1">
    <location>
        <position position="121"/>
    </location>
    <ligand>
        <name>carbamoyl phosphate</name>
        <dbReference type="ChEBI" id="CHEBI:58228"/>
    </ligand>
</feature>
<feature type="binding site" evidence="1">
    <location>
        <position position="151"/>
    </location>
    <ligand>
        <name>carbamoyl phosphate</name>
        <dbReference type="ChEBI" id="CHEBI:58228"/>
    </ligand>
</feature>
<feature type="binding site" evidence="1">
    <location>
        <position position="154"/>
    </location>
    <ligand>
        <name>carbamoyl phosphate</name>
        <dbReference type="ChEBI" id="CHEBI:58228"/>
    </ligand>
</feature>
<feature type="binding site" evidence="1">
    <location>
        <position position="184"/>
    </location>
    <ligand>
        <name>L-aspartate</name>
        <dbReference type="ChEBI" id="CHEBI:29991"/>
    </ligand>
</feature>
<feature type="binding site" evidence="1">
    <location>
        <position position="239"/>
    </location>
    <ligand>
        <name>L-aspartate</name>
        <dbReference type="ChEBI" id="CHEBI:29991"/>
    </ligand>
</feature>
<feature type="binding site" evidence="1">
    <location>
        <position position="280"/>
    </location>
    <ligand>
        <name>carbamoyl phosphate</name>
        <dbReference type="ChEBI" id="CHEBI:58228"/>
    </ligand>
</feature>
<feature type="binding site" evidence="1">
    <location>
        <position position="281"/>
    </location>
    <ligand>
        <name>carbamoyl phosphate</name>
        <dbReference type="ChEBI" id="CHEBI:58228"/>
    </ligand>
</feature>
<dbReference type="EC" id="2.1.3.2" evidence="1"/>
<dbReference type="EMBL" id="AL646052">
    <property type="protein sequence ID" value="CAD14208.1"/>
    <property type="molecule type" value="Genomic_DNA"/>
</dbReference>
<dbReference type="RefSeq" id="WP_011000633.1">
    <property type="nucleotide sequence ID" value="NC_003295.1"/>
</dbReference>
<dbReference type="SMR" id="Q8Y1L2"/>
<dbReference type="STRING" id="267608.RSc0678"/>
<dbReference type="EnsemblBacteria" id="CAD14208">
    <property type="protein sequence ID" value="CAD14208"/>
    <property type="gene ID" value="RSc0678"/>
</dbReference>
<dbReference type="KEGG" id="rso:RSc0678"/>
<dbReference type="eggNOG" id="COG0540">
    <property type="taxonomic scope" value="Bacteria"/>
</dbReference>
<dbReference type="HOGENOM" id="CLU_043846_2_0_4"/>
<dbReference type="UniPathway" id="UPA00070">
    <property type="reaction ID" value="UER00116"/>
</dbReference>
<dbReference type="Proteomes" id="UP000001436">
    <property type="component" value="Chromosome"/>
</dbReference>
<dbReference type="GO" id="GO:0005829">
    <property type="term" value="C:cytosol"/>
    <property type="evidence" value="ECO:0007669"/>
    <property type="project" value="TreeGrafter"/>
</dbReference>
<dbReference type="GO" id="GO:0016597">
    <property type="term" value="F:amino acid binding"/>
    <property type="evidence" value="ECO:0007669"/>
    <property type="project" value="InterPro"/>
</dbReference>
<dbReference type="GO" id="GO:0004070">
    <property type="term" value="F:aspartate carbamoyltransferase activity"/>
    <property type="evidence" value="ECO:0007669"/>
    <property type="project" value="UniProtKB-UniRule"/>
</dbReference>
<dbReference type="GO" id="GO:0006207">
    <property type="term" value="P:'de novo' pyrimidine nucleobase biosynthetic process"/>
    <property type="evidence" value="ECO:0007669"/>
    <property type="project" value="InterPro"/>
</dbReference>
<dbReference type="GO" id="GO:0044205">
    <property type="term" value="P:'de novo' UMP biosynthetic process"/>
    <property type="evidence" value="ECO:0007669"/>
    <property type="project" value="UniProtKB-UniRule"/>
</dbReference>
<dbReference type="GO" id="GO:0006520">
    <property type="term" value="P:amino acid metabolic process"/>
    <property type="evidence" value="ECO:0007669"/>
    <property type="project" value="InterPro"/>
</dbReference>
<dbReference type="FunFam" id="3.40.50.1370:FF:000007">
    <property type="entry name" value="Aspartate carbamoyltransferase"/>
    <property type="match status" value="1"/>
</dbReference>
<dbReference type="Gene3D" id="3.40.50.1370">
    <property type="entry name" value="Aspartate/ornithine carbamoyltransferase"/>
    <property type="match status" value="2"/>
</dbReference>
<dbReference type="HAMAP" id="MF_00001">
    <property type="entry name" value="Asp_carb_tr"/>
    <property type="match status" value="1"/>
</dbReference>
<dbReference type="InterPro" id="IPR006132">
    <property type="entry name" value="Asp/Orn_carbamoyltranf_P-bd"/>
</dbReference>
<dbReference type="InterPro" id="IPR006130">
    <property type="entry name" value="Asp/Orn_carbamoylTrfase"/>
</dbReference>
<dbReference type="InterPro" id="IPR036901">
    <property type="entry name" value="Asp/Orn_carbamoylTrfase_sf"/>
</dbReference>
<dbReference type="InterPro" id="IPR002082">
    <property type="entry name" value="Asp_carbamoyltransf"/>
</dbReference>
<dbReference type="InterPro" id="IPR006131">
    <property type="entry name" value="Asp_carbamoyltransf_Asp/Orn-bd"/>
</dbReference>
<dbReference type="NCBIfam" id="TIGR00670">
    <property type="entry name" value="asp_carb_tr"/>
    <property type="match status" value="1"/>
</dbReference>
<dbReference type="NCBIfam" id="NF002032">
    <property type="entry name" value="PRK00856.1"/>
    <property type="match status" value="1"/>
</dbReference>
<dbReference type="PANTHER" id="PTHR45753:SF6">
    <property type="entry name" value="ASPARTATE CARBAMOYLTRANSFERASE"/>
    <property type="match status" value="1"/>
</dbReference>
<dbReference type="PANTHER" id="PTHR45753">
    <property type="entry name" value="ORNITHINE CARBAMOYLTRANSFERASE, MITOCHONDRIAL"/>
    <property type="match status" value="1"/>
</dbReference>
<dbReference type="Pfam" id="PF00185">
    <property type="entry name" value="OTCace"/>
    <property type="match status" value="1"/>
</dbReference>
<dbReference type="Pfam" id="PF02729">
    <property type="entry name" value="OTCace_N"/>
    <property type="match status" value="1"/>
</dbReference>
<dbReference type="PRINTS" id="PR00100">
    <property type="entry name" value="AOTCASE"/>
</dbReference>
<dbReference type="PRINTS" id="PR00101">
    <property type="entry name" value="ATCASE"/>
</dbReference>
<dbReference type="SUPFAM" id="SSF53671">
    <property type="entry name" value="Aspartate/ornithine carbamoyltransferase"/>
    <property type="match status" value="1"/>
</dbReference>
<dbReference type="PROSITE" id="PS00097">
    <property type="entry name" value="CARBAMOYLTRANSFERASE"/>
    <property type="match status" value="1"/>
</dbReference>
<comment type="function">
    <text evidence="1">Catalyzes the condensation of carbamoyl phosphate and aspartate to form carbamoyl aspartate and inorganic phosphate, the committed step in the de novo pyrimidine nucleotide biosynthesis pathway.</text>
</comment>
<comment type="catalytic activity">
    <reaction evidence="1">
        <text>carbamoyl phosphate + L-aspartate = N-carbamoyl-L-aspartate + phosphate + H(+)</text>
        <dbReference type="Rhea" id="RHEA:20013"/>
        <dbReference type="ChEBI" id="CHEBI:15378"/>
        <dbReference type="ChEBI" id="CHEBI:29991"/>
        <dbReference type="ChEBI" id="CHEBI:32814"/>
        <dbReference type="ChEBI" id="CHEBI:43474"/>
        <dbReference type="ChEBI" id="CHEBI:58228"/>
        <dbReference type="EC" id="2.1.3.2"/>
    </reaction>
</comment>
<comment type="pathway">
    <text evidence="1">Pyrimidine metabolism; UMP biosynthesis via de novo pathway; (S)-dihydroorotate from bicarbonate: step 2/3.</text>
</comment>
<comment type="subunit">
    <text evidence="1">Heterododecamer (2C3:3R2) of six catalytic PyrB chains organized as two trimers (C3), and six regulatory PyrI chains organized as three dimers (R2).</text>
</comment>
<comment type="similarity">
    <text evidence="1">Belongs to the aspartate/ornithine carbamoyltransferase superfamily. ATCase family.</text>
</comment>
<accession>Q8Y1L2</accession>
<proteinExistence type="inferred from homology"/>